<keyword id="KW-0342">GTP-binding</keyword>
<keyword id="KW-0547">Nucleotide-binding</keyword>
<keyword id="KW-0677">Repeat</keyword>
<keyword id="KW-0690">Ribosome biogenesis</keyword>
<reference key="1">
    <citation type="journal article" date="2007" name="ISME J.">
        <title>Population level functional diversity in a microbial community revealed by comparative genomic and metagenomic analyses.</title>
        <authorList>
            <person name="Bhaya D."/>
            <person name="Grossman A.R."/>
            <person name="Steunou A.-S."/>
            <person name="Khuri N."/>
            <person name="Cohan F.M."/>
            <person name="Hamamura N."/>
            <person name="Melendrez M.C."/>
            <person name="Bateson M.M."/>
            <person name="Ward D.M."/>
            <person name="Heidelberg J.F."/>
        </authorList>
    </citation>
    <scope>NUCLEOTIDE SEQUENCE [LARGE SCALE GENOMIC DNA]</scope>
    <source>
        <strain>JA-3-3Ab</strain>
    </source>
</reference>
<evidence type="ECO:0000255" key="1">
    <source>
        <dbReference type="HAMAP-Rule" id="MF_00195"/>
    </source>
</evidence>
<gene>
    <name evidence="1" type="primary">der</name>
    <name type="synonym">engA</name>
    <name type="ordered locus">CYA_1217</name>
</gene>
<protein>
    <recommendedName>
        <fullName evidence="1">GTPase Der</fullName>
    </recommendedName>
    <alternativeName>
        <fullName evidence="1">GTP-binding protein EngA</fullName>
    </alternativeName>
</protein>
<sequence>MALPLVAVVGRPNVGKSSLVNRLAGVRSAIVHDEPGITRDRLYQEVEWNGRRLRVVDTGGLVFGDDSEFLPHIRQQAMAAMAEAHAVIFVVDGREGLTPADKELADWLRRQPLPVVVAVNKCESGQLGLAQAAAFWELGLGEPIPCSAVHGNGVAELLEAVLPHLPEVAQEAADEPDPIAVAIVGRPNVGKSSLLNRLVGSERAIVSPIAGTTRDAVDTLVEWEGQSYRLIDTAGIRRKSRVEYGVEFFSINRAFKAIQRSDVVLLVIDALEGVTEQDQRLAGRIEEEGRACIIVVNKWDAVENKDTHTINEYTREIRERLYFIDWAPLLFVSALTGQRTHKIFAEVNTAVAAHRKRIATSVVNEVLQDALAWQSPPANRQGKQGKIYYGTQVAERPPTFLLFVNDPDLFKENYRRYLEKHFRQNLDFTGTPIRFRWRSKSERLVGRAVQKLEGSLASR</sequence>
<proteinExistence type="inferred from homology"/>
<name>DER_SYNJA</name>
<organism>
    <name type="scientific">Synechococcus sp. (strain JA-3-3Ab)</name>
    <name type="common">Cyanobacteria bacterium Yellowstone A-Prime</name>
    <dbReference type="NCBI Taxonomy" id="321327"/>
    <lineage>
        <taxon>Bacteria</taxon>
        <taxon>Bacillati</taxon>
        <taxon>Cyanobacteriota</taxon>
        <taxon>Cyanophyceae</taxon>
        <taxon>Synechococcales</taxon>
        <taxon>Synechococcaceae</taxon>
        <taxon>Synechococcus</taxon>
    </lineage>
</organism>
<accession>Q2JV46</accession>
<dbReference type="EMBL" id="CP000239">
    <property type="protein sequence ID" value="ABC99401.1"/>
    <property type="molecule type" value="Genomic_DNA"/>
</dbReference>
<dbReference type="RefSeq" id="WP_011430082.1">
    <property type="nucleotide sequence ID" value="NC_007775.1"/>
</dbReference>
<dbReference type="SMR" id="Q2JV46"/>
<dbReference type="STRING" id="321327.CYA_1217"/>
<dbReference type="KEGG" id="cya:CYA_1217"/>
<dbReference type="eggNOG" id="COG1160">
    <property type="taxonomic scope" value="Bacteria"/>
</dbReference>
<dbReference type="HOGENOM" id="CLU_016077_6_2_3"/>
<dbReference type="OrthoDB" id="9805918at2"/>
<dbReference type="Proteomes" id="UP000008818">
    <property type="component" value="Chromosome"/>
</dbReference>
<dbReference type="GO" id="GO:0005525">
    <property type="term" value="F:GTP binding"/>
    <property type="evidence" value="ECO:0007669"/>
    <property type="project" value="UniProtKB-UniRule"/>
</dbReference>
<dbReference type="GO" id="GO:0043022">
    <property type="term" value="F:ribosome binding"/>
    <property type="evidence" value="ECO:0007669"/>
    <property type="project" value="TreeGrafter"/>
</dbReference>
<dbReference type="GO" id="GO:0042254">
    <property type="term" value="P:ribosome biogenesis"/>
    <property type="evidence" value="ECO:0007669"/>
    <property type="project" value="UniProtKB-KW"/>
</dbReference>
<dbReference type="CDD" id="cd01894">
    <property type="entry name" value="EngA1"/>
    <property type="match status" value="1"/>
</dbReference>
<dbReference type="CDD" id="cd01895">
    <property type="entry name" value="EngA2"/>
    <property type="match status" value="1"/>
</dbReference>
<dbReference type="FunFam" id="3.30.300.20:FF:000004">
    <property type="entry name" value="GTPase Der"/>
    <property type="match status" value="1"/>
</dbReference>
<dbReference type="FunFam" id="3.40.50.300:FF:000040">
    <property type="entry name" value="GTPase Der"/>
    <property type="match status" value="1"/>
</dbReference>
<dbReference type="FunFam" id="3.40.50.300:FF:000057">
    <property type="entry name" value="GTPase Der"/>
    <property type="match status" value="1"/>
</dbReference>
<dbReference type="Gene3D" id="3.30.300.20">
    <property type="match status" value="1"/>
</dbReference>
<dbReference type="Gene3D" id="3.40.50.300">
    <property type="entry name" value="P-loop containing nucleotide triphosphate hydrolases"/>
    <property type="match status" value="2"/>
</dbReference>
<dbReference type="HAMAP" id="MF_00195">
    <property type="entry name" value="GTPase_Der"/>
    <property type="match status" value="1"/>
</dbReference>
<dbReference type="InterPro" id="IPR031166">
    <property type="entry name" value="G_ENGA"/>
</dbReference>
<dbReference type="InterPro" id="IPR006073">
    <property type="entry name" value="GTP-bd"/>
</dbReference>
<dbReference type="InterPro" id="IPR016484">
    <property type="entry name" value="GTPase_Der"/>
</dbReference>
<dbReference type="InterPro" id="IPR032859">
    <property type="entry name" value="KH_dom-like"/>
</dbReference>
<dbReference type="InterPro" id="IPR015946">
    <property type="entry name" value="KH_dom-like_a/b"/>
</dbReference>
<dbReference type="InterPro" id="IPR027417">
    <property type="entry name" value="P-loop_NTPase"/>
</dbReference>
<dbReference type="InterPro" id="IPR005225">
    <property type="entry name" value="Small_GTP-bd"/>
</dbReference>
<dbReference type="NCBIfam" id="TIGR03594">
    <property type="entry name" value="GTPase_EngA"/>
    <property type="match status" value="1"/>
</dbReference>
<dbReference type="NCBIfam" id="TIGR00231">
    <property type="entry name" value="small_GTP"/>
    <property type="match status" value="2"/>
</dbReference>
<dbReference type="PANTHER" id="PTHR43834">
    <property type="entry name" value="GTPASE DER"/>
    <property type="match status" value="1"/>
</dbReference>
<dbReference type="PANTHER" id="PTHR43834:SF6">
    <property type="entry name" value="GTPASE DER"/>
    <property type="match status" value="1"/>
</dbReference>
<dbReference type="Pfam" id="PF14714">
    <property type="entry name" value="KH_dom-like"/>
    <property type="match status" value="1"/>
</dbReference>
<dbReference type="Pfam" id="PF01926">
    <property type="entry name" value="MMR_HSR1"/>
    <property type="match status" value="2"/>
</dbReference>
<dbReference type="PIRSF" id="PIRSF006485">
    <property type="entry name" value="GTP-binding_EngA"/>
    <property type="match status" value="1"/>
</dbReference>
<dbReference type="PRINTS" id="PR00326">
    <property type="entry name" value="GTP1OBG"/>
</dbReference>
<dbReference type="SUPFAM" id="SSF52540">
    <property type="entry name" value="P-loop containing nucleoside triphosphate hydrolases"/>
    <property type="match status" value="2"/>
</dbReference>
<dbReference type="PROSITE" id="PS51712">
    <property type="entry name" value="G_ENGA"/>
    <property type="match status" value="2"/>
</dbReference>
<feature type="chain" id="PRO_1000011765" description="GTPase Der">
    <location>
        <begin position="1"/>
        <end position="459"/>
    </location>
</feature>
<feature type="domain" description="EngA-type G 1">
    <location>
        <begin position="4"/>
        <end position="169"/>
    </location>
</feature>
<feature type="domain" description="EngA-type G 2">
    <location>
        <begin position="179"/>
        <end position="355"/>
    </location>
</feature>
<feature type="domain" description="KH-like" evidence="1">
    <location>
        <begin position="356"/>
        <end position="441"/>
    </location>
</feature>
<feature type="binding site" evidence="1">
    <location>
        <begin position="10"/>
        <end position="17"/>
    </location>
    <ligand>
        <name>GTP</name>
        <dbReference type="ChEBI" id="CHEBI:37565"/>
        <label>1</label>
    </ligand>
</feature>
<feature type="binding site" evidence="1">
    <location>
        <begin position="57"/>
        <end position="61"/>
    </location>
    <ligand>
        <name>GTP</name>
        <dbReference type="ChEBI" id="CHEBI:37565"/>
        <label>1</label>
    </ligand>
</feature>
<feature type="binding site" evidence="1">
    <location>
        <begin position="120"/>
        <end position="123"/>
    </location>
    <ligand>
        <name>GTP</name>
        <dbReference type="ChEBI" id="CHEBI:37565"/>
        <label>1</label>
    </ligand>
</feature>
<feature type="binding site" evidence="1">
    <location>
        <begin position="185"/>
        <end position="192"/>
    </location>
    <ligand>
        <name>GTP</name>
        <dbReference type="ChEBI" id="CHEBI:37565"/>
        <label>2</label>
    </ligand>
</feature>
<feature type="binding site" evidence="1">
    <location>
        <begin position="232"/>
        <end position="236"/>
    </location>
    <ligand>
        <name>GTP</name>
        <dbReference type="ChEBI" id="CHEBI:37565"/>
        <label>2</label>
    </ligand>
</feature>
<feature type="binding site" evidence="1">
    <location>
        <begin position="297"/>
        <end position="300"/>
    </location>
    <ligand>
        <name>GTP</name>
        <dbReference type="ChEBI" id="CHEBI:37565"/>
        <label>2</label>
    </ligand>
</feature>
<comment type="function">
    <text evidence="1">GTPase that plays an essential role in the late steps of ribosome biogenesis.</text>
</comment>
<comment type="subunit">
    <text evidence="1">Associates with the 50S ribosomal subunit.</text>
</comment>
<comment type="similarity">
    <text evidence="1">Belongs to the TRAFAC class TrmE-Era-EngA-EngB-Septin-like GTPase superfamily. EngA (Der) GTPase family.</text>
</comment>